<gene>
    <name evidence="1" type="primary">cyaY</name>
    <name type="ordered locus">VCM66_0123</name>
</gene>
<accession>C3LPW5</accession>
<name>CYAY_VIBCM</name>
<evidence type="ECO:0000255" key="1">
    <source>
        <dbReference type="HAMAP-Rule" id="MF_00142"/>
    </source>
</evidence>
<comment type="function">
    <text evidence="1">Involved in iron-sulfur (Fe-S) cluster assembly. May act as a regulator of Fe-S biogenesis.</text>
</comment>
<comment type="similarity">
    <text evidence="1">Belongs to the frataxin family.</text>
</comment>
<keyword id="KW-0408">Iron</keyword>
<keyword id="KW-0479">Metal-binding</keyword>
<sequence>MNETEFHQLVDSQLERIEAAIDEAGADIDYETSGNVMTLEFDDGSQIIINRQEPMREIWLASKSGGYHFKSIDGEWICSKTGLELLTLLKQECDKHADEPIDWV</sequence>
<proteinExistence type="inferred from homology"/>
<organism>
    <name type="scientific">Vibrio cholerae serotype O1 (strain M66-2)</name>
    <dbReference type="NCBI Taxonomy" id="579112"/>
    <lineage>
        <taxon>Bacteria</taxon>
        <taxon>Pseudomonadati</taxon>
        <taxon>Pseudomonadota</taxon>
        <taxon>Gammaproteobacteria</taxon>
        <taxon>Vibrionales</taxon>
        <taxon>Vibrionaceae</taxon>
        <taxon>Vibrio</taxon>
    </lineage>
</organism>
<feature type="chain" id="PRO_1000123048" description="Iron-sulfur cluster assembly protein CyaY">
    <location>
        <begin position="1"/>
        <end position="104"/>
    </location>
</feature>
<protein>
    <recommendedName>
        <fullName evidence="1">Iron-sulfur cluster assembly protein CyaY</fullName>
    </recommendedName>
</protein>
<reference key="1">
    <citation type="journal article" date="2008" name="PLoS ONE">
        <title>A recalibrated molecular clock and independent origins for the cholera pandemic clones.</title>
        <authorList>
            <person name="Feng L."/>
            <person name="Reeves P.R."/>
            <person name="Lan R."/>
            <person name="Ren Y."/>
            <person name="Gao C."/>
            <person name="Zhou Z."/>
            <person name="Ren Y."/>
            <person name="Cheng J."/>
            <person name="Wang W."/>
            <person name="Wang J."/>
            <person name="Qian W."/>
            <person name="Li D."/>
            <person name="Wang L."/>
        </authorList>
    </citation>
    <scope>NUCLEOTIDE SEQUENCE [LARGE SCALE GENOMIC DNA]</scope>
    <source>
        <strain>M66-2</strain>
    </source>
</reference>
<dbReference type="EMBL" id="CP001233">
    <property type="protein sequence ID" value="ACP04459.1"/>
    <property type="molecule type" value="Genomic_DNA"/>
</dbReference>
<dbReference type="RefSeq" id="WP_001005953.1">
    <property type="nucleotide sequence ID" value="NC_012578.1"/>
</dbReference>
<dbReference type="SMR" id="C3LPW5"/>
<dbReference type="GeneID" id="89513210"/>
<dbReference type="KEGG" id="vcm:VCM66_0123"/>
<dbReference type="HOGENOM" id="CLU_080880_3_0_6"/>
<dbReference type="Proteomes" id="UP000001217">
    <property type="component" value="Chromosome I"/>
</dbReference>
<dbReference type="GO" id="GO:0005829">
    <property type="term" value="C:cytosol"/>
    <property type="evidence" value="ECO:0007669"/>
    <property type="project" value="TreeGrafter"/>
</dbReference>
<dbReference type="GO" id="GO:0008199">
    <property type="term" value="F:ferric iron binding"/>
    <property type="evidence" value="ECO:0007669"/>
    <property type="project" value="InterPro"/>
</dbReference>
<dbReference type="GO" id="GO:0008198">
    <property type="term" value="F:ferrous iron binding"/>
    <property type="evidence" value="ECO:0007669"/>
    <property type="project" value="TreeGrafter"/>
</dbReference>
<dbReference type="GO" id="GO:0016226">
    <property type="term" value="P:iron-sulfur cluster assembly"/>
    <property type="evidence" value="ECO:0007669"/>
    <property type="project" value="UniProtKB-UniRule"/>
</dbReference>
<dbReference type="CDD" id="cd00503">
    <property type="entry name" value="Frataxin"/>
    <property type="match status" value="1"/>
</dbReference>
<dbReference type="FunFam" id="3.30.920.10:FF:000007">
    <property type="entry name" value="Iron-sulfur cluster assembly protein CyaY"/>
    <property type="match status" value="1"/>
</dbReference>
<dbReference type="Gene3D" id="3.30.920.10">
    <property type="entry name" value="Frataxin/CyaY"/>
    <property type="match status" value="1"/>
</dbReference>
<dbReference type="HAMAP" id="MF_00142">
    <property type="entry name" value="CyaY"/>
    <property type="match status" value="1"/>
</dbReference>
<dbReference type="InterPro" id="IPR047584">
    <property type="entry name" value="CyaY"/>
</dbReference>
<dbReference type="InterPro" id="IPR002908">
    <property type="entry name" value="Frataxin/CyaY"/>
</dbReference>
<dbReference type="InterPro" id="IPR036524">
    <property type="entry name" value="Frataxin/CyaY_sf"/>
</dbReference>
<dbReference type="InterPro" id="IPR020895">
    <property type="entry name" value="Frataxin_CS"/>
</dbReference>
<dbReference type="NCBIfam" id="TIGR03421">
    <property type="entry name" value="FeS_CyaY"/>
    <property type="match status" value="1"/>
</dbReference>
<dbReference type="PANTHER" id="PTHR16821">
    <property type="entry name" value="FRATAXIN"/>
    <property type="match status" value="1"/>
</dbReference>
<dbReference type="PANTHER" id="PTHR16821:SF2">
    <property type="entry name" value="FRATAXIN, MITOCHONDRIAL"/>
    <property type="match status" value="1"/>
</dbReference>
<dbReference type="Pfam" id="PF01491">
    <property type="entry name" value="Frataxin_Cyay"/>
    <property type="match status" value="1"/>
</dbReference>
<dbReference type="SMART" id="SM01219">
    <property type="entry name" value="Frataxin_Cyay"/>
    <property type="match status" value="1"/>
</dbReference>
<dbReference type="SUPFAM" id="SSF55387">
    <property type="entry name" value="Frataxin/Nqo15-like"/>
    <property type="match status" value="1"/>
</dbReference>
<dbReference type="PROSITE" id="PS01344">
    <property type="entry name" value="FRATAXIN_1"/>
    <property type="match status" value="1"/>
</dbReference>
<dbReference type="PROSITE" id="PS50810">
    <property type="entry name" value="FRATAXIN_2"/>
    <property type="match status" value="1"/>
</dbReference>